<organism>
    <name type="scientific">Staphylococcus aureus (strain MW2)</name>
    <dbReference type="NCBI Taxonomy" id="196620"/>
    <lineage>
        <taxon>Bacteria</taxon>
        <taxon>Bacillati</taxon>
        <taxon>Bacillota</taxon>
        <taxon>Bacilli</taxon>
        <taxon>Bacillales</taxon>
        <taxon>Staphylococcaceae</taxon>
        <taxon>Staphylococcus</taxon>
    </lineage>
</organism>
<gene>
    <name type="primary">ebh</name>
    <name type="ordered locus">MW1324</name>
</gene>
<protein>
    <recommendedName>
        <fullName>Extracellular matrix-binding protein ebh</fullName>
    </recommendedName>
    <alternativeName>
        <fullName>ECM-binding protein homolog</fullName>
    </alternativeName>
</protein>
<reference key="1">
    <citation type="journal article" date="2002" name="Lancet">
        <title>Genome and virulence determinants of high virulence community-acquired MRSA.</title>
        <authorList>
            <person name="Baba T."/>
            <person name="Takeuchi F."/>
            <person name="Kuroda M."/>
            <person name="Yuzawa H."/>
            <person name="Aoki K."/>
            <person name="Oguchi A."/>
            <person name="Nagai Y."/>
            <person name="Iwama N."/>
            <person name="Asano K."/>
            <person name="Naimi T."/>
            <person name="Kuroda H."/>
            <person name="Cui L."/>
            <person name="Yamamoto K."/>
            <person name="Hiramatsu K."/>
        </authorList>
    </citation>
    <scope>NUCLEOTIDE SEQUENCE [LARGE SCALE GENOMIC DNA]</scope>
    <source>
        <strain>MW2</strain>
    </source>
</reference>
<sequence>MNYRDKIQKFSIRKYTVGTFSTVIATLVFLGFNTSQAHAAETNQPASVVKQKQQSNNEQTENRESQVQNSQNSQNSQSLSATHENEQPNISQANLVDQKVAQSSTTNDEQPASQNVNTKKDSATAATTQPDKEEGKHKQNESQSANKNGNDNRAAHLENHEANVVTASDSSDNGNVQHDRNELQAFFDANYHDYRFIDRENADSGTFNYVKGIFEKINTLLGSNDPINNKDLQLAYKELEQAVALIRTMPQRQQTSRRSNRIQTRSVESRAAEPRSVSDYQNANSSYYVENANDGSGYPVGTYINASSKGAPYNLPTTPWNTLKASDSKEIALMTAKQTGDGYQWVIKFNKGHAPHQNMIFWFALPADQVPVGRTDFVTVNSDGTNVQWSHGAGAGANKPLQQMWEYGVNDPDRSHDFKIRNRSGQVIYSWPTVHVYSLEDLSRASDYFSEAGATAATKAFGRQNFEYINGQKPAESPGVPKVYTFIGQGDASYTISFKTQGPTVNKLYYAAGGRALEYNQLFMYSQLYVESTQDHQQRLNGLRQVVNRTYRIGTTKRVEVSQGNVQTKKVLESTNLNIDGFVDDPLSYVKTPSNKVLGFYPTNATTNAFRPGGVQELNEYQLSQLFTDQKLQEAARTRNPIRLMIGFDYPDGYGNSETLVPVNLTVLPEIQHNIKFFKNDDTQNIAEKPFSKQAGHPVFYVYAGNQGNASVNLGGSVTSIQPLRINLTSNENFTDKDWQITGIPRTLHIENSTNRTNNARERNIELVGNLLPGDYFGTIRFGRKEQLFEIRVKPHTPTITTTAEQLRGTALQKVPVNISGIPLDPSALVYLVAPTNQTTNGGSEADQIPSGYTILATGTPDGVHNTITIRPQDYVVFIPPVGKQIRAVVYYNKVVASNMSNAVTILPDDIPPTINNPVGINAKYYRGDEVNFTMGVSDRHSGIKNTTITTLPNGWTSNLTKSDNKNGSLAITGRVSMNQAFNSDITFKVSATDNVNNTTNDSQSKHVSIHVGKISEDAHPIVLGNTEKVVVVNPTAVSNDEKQSIITAFMNKNQNIRGYLASTDPVTVDNNGNVTLHYRDGSSTTLDATNVMTYEPVVKSEYQTANAAKTATVTIAKGQSFNIGDIKQYFTLSNGQAIPSGTFTNITSDRTILTAQEVSQMNAGTQLYHIVASNAYHKDTEDFYISLKIVDVKQPEGDQRVYRTSTYDLTTDEISKVKQAFINANRDVITLAEGNISVTNTPNGANVSTITVNINKGRLTKSFASNLANMNFLRWVNFPQDYTVTWTNAKIANRPTDGGLSWSDDHKSLIYRYDATLGTQITTNDILTMLKATTTVPGLRNNITGNEKAQAEAGGRPNFRTTGYSQSNATTDGQRQFTLNGQVIQVLDIINPSNGYGGQPVTNSNTRANHSNSTVVNVNEPAANGASAFTIDHVVKSNSTHNASDAVYKAQLYLTPYGPKQYVEHLNQNTGNTTDAINIYFVPSDLVNPTISVGNYTNHQVFSGETFTNTITANDNFGVQSVTVPNTSQITGTVDNNHQHVSATAPNVTSATNKTINLLATDTSGNTATTSFNVTVKPLRDKYRVGTSSTAANPVRIANISNNATVSQADQTAIINSLTFTETVPNRSYARASANEITSKTVSNVSRTGNNANVTVTATYQDGTTSTVTVPVKHVIPEIVAHSHYTVQGQDFPAGNGSSASDYFKLSNGSAIPDATITWVSGQAPNKDNTRIGEDITVTAHILIDGETTPITKTATYKVVSTVPKHVFETNRGAVFPGVSDVYDAKQYVKPVNDSWTQNAQRMNFQFTNSYGPSKDVVGISTRDIRVTYDNHQTQIIKILAKVKPDPPRIDGNSVTYKAGLTNQQIKINNVLSSSSIKLFKADNTPLTITNTTYGSGNTAVVTVSDALPNGVIKARSSITMNNVTYTTQDEHGRAIDVTRNESVDSNDSATVTVTPQLQATTEGAVFIKGGDGFDFGHVERFIQNPPHGATVAWHDSPDTWKNTVGNTHKTAVVTLPNGQGTRNVEVPVKVYPVANAKAPSRDVKGQNLTNGTDAMNYITFDPNTNTNGITAAWANRQQPNNQQAGVQHLNVDVTYPGISAAKRVPVTVNVYQFEFPQTTYTTTVGGTLASGTQASGYAHMQNATGLPTDGFTYKWNRDTTGTNDANWSAMNKPNVAKVVNAKYDVIYNGHTFATSLPAKFVVKDVQPAKPTVTETAAGAITIAPGANQTVNTHAGNVTTYADKLVIKRNGNVVTTFTRRNNTSPWVKEASAATVAGIAGTNNGITVAAGTFNPADTIQVVATQGSGETVSDEQRSDDFTVVAPQPNQATTKIWQNGHIDITPNNPSGHLINPTQAMDIAYTEKVGNGAEHSKTINVVRGQNNQWTIANKPDYVTLDAQTGKVTFNANTIKPNSSITITPKAGTGHSVSSNPSTLTAPAAHTVNTTEIVKDYGSNVTAAEINNAVQVANKRTATIKNGTAMPTNLAGGSTTTIPVTVTYNDGSTEEVQESIFTKADKRELITAKNHLDDPVSTEGKKPGTITQYNNAIHNAQQQINTAKTEAQQVINNDRATPQQVSDALTKVRAAQTKIDQAKALLQNKEDNSQLVTSKNNLQSSVNQVPSTAGMTQQSIDNYNAKKREAETEITAAQRVIDNGDATPQQISEEKHRVDNALTALNQAKQNLTADTHTLEQAVQQLNRTGTTTGKKPASITAYNNSMHALQAELTSAKNSANAIIQKPIRSVQEVQTALTNVNRVNERLTQAINQLVPLADNSALRTAKTKLDEEINKSVTTDGMTQSSIQAYENAKRAGQTESTNAQNVINNGDATDQQIAEEKTKVEEKYNSLKQAIAGLTPDLAPLQTAKTQLQNDIDQPTSTTGMTSTSIAAFNEKLSAARTKIQEIDRVLASHPDVATIRQNVTAANAAKTALDQARNGLTVDKAPLENAKNQLQHSIDTQTSTTGMTQDSINAYNAKLTAARNKIQQINQVLAGSPTVEQINTNTSAANQAKSDLDHARQALTPDKAPLQTAKTQLEQSINQPTDTTGMTTASLNAYNQKLQAARQKLTEINQVLNGNPTVQNINDKVTEANQAKDQLNTARQGLTLDRQPALTTLHGASNLNQAQQNNFTQQINAAQNHAALETIKSNITALNTAMTKLKDSVADNNTIKSGQNYTDATPANKQAYDNAVNAAKGVIGETTNPTMDVNTVNQKAASVKSTKDALDGQQNLQRAKTEATNAITHASDLNQAQKNALTQQVNSAQNVHAVNDIKQTTQSLNTAMTGLKRGVANHNQVVQSDNYVNADTNKKNDYNNAYNHANDIINGNAQHPVITPSDVNNALSNVTSKEHALNGEAKLNAAKQEANTALGQLNNLNNAQRQNLQSQINSAHQIETVNTIKQNATNLNSAMGNLRQAVADKDQVKRTEDYADADTAKQNAYNSAVSSAETIINQTTNPTMSVDDVNRATSAVTSNKNALNGDEKLAQSKTDAARAIDALPHLNNAQKADVKSKINAASNIAGVNTVKQQGTDLNTAMGNLQGAINDEQTTLNSQNYQDATPSKKTAYTNAVQAAKDILNKSNGQNKTKDQVTEAMNQLNSAKNNLDGTRLLDQAKQTAKQQLNNMTHLTTAQKTNLTNQINSGTTVAGVHTVQSNANTLDQAMNTLRQSIANKDATKASEDYVDANNDKQTAYNNAVAAAETIINANSNPEMNPSTITQKAEQVNSSKTALNGDENLATAKQNAKTYLNTLTSITDAQKNNLISQISSATRVSGVDTVKQNAQHLDQAMASLQSGINNESQVKSSEKYRDADTNKQQEYDNAITAAKAILNKQHGPNTAQNAVEAALQRVNTAKDALNGDAKLIAAQNAAKQHLGTLTHITTAQRNDLTNQISQATNLAGVESVKQNANSLDGAMGNLQTAINDKSGTLASQNFLDADEQKRNAYNQAVSAAETILNKQTGPNTAKTAVEQALNNVNNAKHALNGTQNLNNAKQAAITAINGASDLNQHQKDALKAQANGAQRVSNAQDVQRNATELNTAMGTLKHAIADKTNTLASSKYVNADSTKQNAYTTKVTNAEHIISGTPTVVTTPSEVTAAANQVNSAKQELNGDERLRVAKQNANTAIDALTQLNTPQKAKLKEQVGQANTLDDAMNSLQGAINDKDATLRNQNYLDADESKRNAYTQAVTAAEGILNKQTGGNTSKADVDNALNAVTRAKAALNGAENLRNAKTSATNTINGLPNLTQLQKDNLKHQVEQAQNVAGVNGVKDKGNTLNTAMGALRTSIQNDNTTKTSQNYLDASDSNKNNYNTAVNNANGVINATNNPNMDANAINGMANQVNTTKAALNGVQNLAQAKTNATNTINNAHDLNQKQKDALKTQVNNAQRVSDANNVQHTATELNGAMTALKAAIADKERTKASGNYVNADQEKRQAYDSKVTNAENIINGTPNATLTVNDVNSATSQVNAAKTALNGDNNLRVAKENANNTIDGLAQLNNAQKAKLKEQVQSATTLEGVQTVKNSSQTLNTAMKGLRDSIANEATIKAGQNYTDASPTNRNEYDSAVTAAKAIINQTSNPTMEPNTITQATSQVTTKEHALNGAQNLAQAKTTAKNNLNNLTSINNAQKDALTRSIDGATTVAGVNQETAKATELNNAMHSLQNGINDETQTKQTQKYLDAEPNKKSAYDQAVNAAKAILTKASGQNVDKAAVEQALQNVNSTKTALNGDAKLNEAKAAAKQTLGTLTHINNAQRNALDNEITQATNVEGVNTVKAKAQQLDGAMGQLETSIRDKDTTLQSQNYQDADDAKRTAYSQAVNAAATILNKTAGGNTPKADVERAMQAVAQANTALNGIQNLERAKQAANTAITNASDLNTKQKEALKAQVTSAGRVSAANGVEHTATEINTAMTALKRAIADKADTKTSGNYVNADANKRQAYDEKVTAAESIVNGTPTPTLTPSDVTNAATQVTNAKTQLNGNHNLEVAKQNANTAIDGLTSLNGPQKAKLKEQVGQATTLPNVQTVRDNAQTLNTAMKGLRDSIANEATIKAGQNYTDASPNNRSEYDSAVTAAKAIIGQTTSPSMNAQEINQAKDQVTAKQQALNGQENLRTAQTNAKQHLNGLSDLTNAQKEAAKRQIEGATHVNEVTQAQNNADALNTAMTNLKNGIQDQNTIKQGVNFTDADEAKRNAYTNAVTQAEQILNKAQGPNTAKDNVESALQNVQRAKNELNGNQNVANAKTTAKNALNNLTSINNAQKEALKSQIEGATTVAGVNQVSTTASELNTAMSNLQRGINDEAATKAAQKYTDADRDKQTAYNDAVTAAKTLLDKTAGTNENKAAVEQALQRVNTAKTALNGDARLNEAKNTAKQQVATMSHLTDAQKANLTSQIESGTTVAGVQGIQANAGTLDQAMNQLRQSIASKDATKSSEDYQDANADLQNAYNDAVTNAEGIISATNNPEMNPDTINQKASQVNSAKSALNGDEKLAAAKQTAKSDIGRLTDLNNAQRTAANAEVDQAPNLAAVTAAKNKATSLNTAMGNLKHALAEKDNTKRSVNYTDADQPKQQAYDTAVTQAEAITNANGSNANETTVQAALNQLNQAKNDLNGDNKVAQAKESAKRALASYSNLNNAQSTAATSQIDNATTVAGVTAAQNTANELNTAMGQLQNGINDQNTVKQQVNFTDADQGKKDAYTNAVTNAQGILDKANGQNMTKAQVEAALNQVTTAKNALNGDANVRQAKSDAKANLGTLTHLNNAQKQDLTSQIEGATTVNGVNSVKTKAQDLDGAMQRLESAIANKDQTKASENYIDADPTKKTAFDNAITQAESYLNKDHGTNKDKQAVEQAIQSVTSTENALNGDANLQRAKTEATQAIDNLTHLNTPQKTALKQQVNAAQRVSGVTDLKNSATSLDNAMDQLKQGIADHDTIVAGGNYTNASPDKQGAYTDAYNAAKNIVNGSPNVITNAADVTAATQRVNNAETSLNGDSNLATAKQQAKDALRQMTHLSDAQKQSITGQIDSATQVTGVQSVKDNATNLDNAMNQLRNSIANKDEVKASQPYVDADTDKQNAYNTAVTSAENIINATSQPTLDPSAVTQAANQVNTNKTALNGAQNLANKKQETTANINQLSHLNNAQKQDLNTQVTNAPNISTVNQVKTKAEQLDQAMERLINGIQDKDQVKQSVNFTDADPEKQTAYNNAVTAAENIINQANGTNANQSQVEAALSTVTTTKQALNGDRKVTDAKNNANQTLSTLDNLNNAQKGAVTGNINQAHTVAEVTQAIQTAQELNTAMGNLKNSLNDKDTTLGSQNFADADPEKKNAYNEAVRNAENILNKSTGTNVPKDQVEAAMNQVNTTKAALNGTQNLEKAKQHANTAIDGLSHLTNAQKEALKQLVQQSTTVAEAQGNEQKANNVDAAMDKLRQSIADNATTKQNQNYTDASPNKKDAYNNAVTTAQGIIDQTTSPTLDPTVINQAAGQVSTTKNALNSNENLEAAKQQATQSLGSLDNLNNAQKQAVTDQINGAHTVDEANQIKQNAQNLNTAMGNLKQAIADKDATKATVNFTDADQAKQQAYNTAVTNAENIISKANGGNATQTEVEQAIQQVNAAKQALNGNANVQHAKDEATALINSSNDLNQAQKNALKQQVQNATTVAGVNNVKQTAQELNNAMTQLKQGIADKEQTKADGNFVNADPDKQNAYNQAVAKAEALISGTPDVVVTPSEITAALNKVTQAKNDLNGNTNLATAKQNVQHAIDQLPNLNQAQRDEYNKQITQATHVPNVNAIQQAATTLNDAMTQLKQGIANKAQIKGSENYHDADTDKQTAYDNAVTKAEELLKQTTNPTMDPNTIQQALTKVNDTNQALNGNQKLADAKQAAKTNLGTLDHLNDAQKQALTTQVEQAPDIATVNNVKQNAQNLNNAMTNLNNALQDKTETLNSINFTDADQAKKDAYTNAVSHAEGILSKANGSNASQTEVEQAMQRVNEAKQALNGNDNVQRAKDAAKQVITNANDLNQAQKDALKQQVDAAQTVANVNTIKQTAQDLNQAMTQLKQGIADKDQTKANGNFVNADTDKQNAYNNAVAHAEQIISGTPNANVDPQQVAQALQQVNQAKGDLNGNHNLQVAKDNANTAIDQLPNLNQPQKTALKDQVSHAELVTGVNAIKQNADALNNAMGTLKQQIQANSQVPQSVDFTQADQDKQQAYNNAANQAQQIANGTPTPVLAPDTVTQAVTTMNQAKDALNGDEKLAQAKQDALANLDTLRDLNQPQRDALRNQINQAQALATVEQTKQNAQNVNTAMGNLKQGIANKDTVKASENYHDADVDKQTAYTNAVSQAEGIINQTTNPTLNPDDITRALTQVTDAKNSLNGEAKLATEKQNAKDAVNAMTHLNDAQKQALKGQIDQSPEIATVNQVKQTATSLDHAMDQLSQAINDKAQTLADGNYLNADPDKQNAYKQAVAKAEALLNKQSGTNEVQAQVESITNEVNAAKQALNGNDNLANAKQQAKQQLANLTHLNDAQKQSFESQITQAPLVTDVTTINQKAQTLDHAMELLRNSVADNQTTLASEDYHDATAQRQNDYNQAVTAANNIINQTTSPTMNPDDVNGATTQVNNTKVALDGDENLAAAKQQANNRLDQLDHLNNAQKQQLQSQITQSSDIAAVNGHKQTAETLNTAMGNLINAIADHQAVEQRGNFINADTDKQTAYNTAVNEAAAMINKQTGQNANQTEVEQAITKVQTTLQALNGDHNLQVAKTNATQAIDALTSLNDPQKTALKDQVTAATLVTAVHQIEQNANTLNQAMHGLRQSIQDNAATKANSKYINEDQPEKQNYDQAVQAANNIINEQTATLDNNAINQAAATVNTTKAALHGDVKLQNDKDHAKQTVSQLAHLNNAQKHMEDTLIDSETTRTAVKQDLTEAQALDQLMDALQQSIADKDATRASSAYVNAEPNKKQAYDEAVQNAESIIAGLNNPTINKGNVSSATQAVTSSKNALDGVERLAQDKQTAGNSLNHLDQLTPAQQQALENQINNATTRDKVAEIIAQAQALNEAIKALKESIKDQPQTEASSKFINEDQAQKDAYTQAVQHAKDLINKTTDPTLAKSIIDQATQAVTDAKNNLHGDQKLAQDKQRATETLNNLSNLNTPQRQALENQINNAATRVEVAQKLTEAQALNQAMEALRNSIQDQQQTEAGSKFINEDKPQKDAYQAAVQNAKDLINQTNNPTLDKAQVEQLTQAVNQAKDNLHGDQKLADDKQHAVTDLNQLNGLNNPQRQALESQINNAATRDEVAQKLAEAKALDQAMQALRNSIQDQQQTESGSKFINEDKPQKDAYQAAVQNAKDLINQTGNPTLDKAQVEQLTQAVTTAKDNLHGDQKLARDQQQAVTTVNALPNINHAQQQALTDAINAAPTRTEVAQHVQTATELDHAMETLKNKVDQVNTDKAQPNYTEASTDKKEAVDQALQAAESITDPTNGSNANKDAVEQALTKLQEKVNELNGDERVAEAKTQAKQNIDQLTHLNADQIATAKQNIDQATQLQPIAELVDQATQLNQSMDQLQQAVNDHTNVEQTVDYTQADSDKQKAYKQAIADAENVLKQNANKQQVDQALQNILNAKQALNGDERVALAKTNGKHDIDQLNALNNAQQDGFKGRIDQSNDLNQIQQIVDEAKALNRAMDQLSEEITGNEGRTKGSTNYVNADTQVKQVYDEAVDKAKQALDKSTGQNLTAEQVIKLNDAVTAAKQALNGEERLNNRKSEALQRLDQLTHLNNAQRQLAIQQINNAETLNKASRAINRATKLDNAMGAVQQYIDEQHLGVISSTNYINADDNLKANYDNAIANAAHELDKVQGNAIAKAEAEQLKQNIIDAQNALNGDQNLANAKDKANAFVNSLNGLNQQQQDLAHKAINNADTVSDVTDIVNNQIDLNDAMETLKHLVDNEIPNAEQTVNYQNADDNAKTNFDDAKRLANALLNSDNTNVNDINGAIQAVNDAIHNLNGDQRLQDAKDKAIQSINQALANKLKEIEASNATDQDKLIAKNKAEELANSIINNINKATSNQDVSQVQTAGNHAIEQVHANEIPKAKIDANKDVDKQVQALIDEIDRNPNLTDKEKQALKDRINQILQQGHNDINNALTKEEIEQAKAQLAQALQEIKDLVKAKENAKQDVDKQVQALIDEIDQNPNLTDKEKQALKDRINQILQQGHNDINNAMTKEEIEQAKAQLAQALQDIKDLVKAKEDAKNAIKALANAKRDQINSNPDLTPEQKAKALKEIDEAEKRALQNVENAQTIDQLNRGLNLGLDDIRNTHVWEVDEQPAVNEIFEATPEQILVNGELIVHRDDIITEQDILAHINLIDQLSAEVIDTPSTATISDSLTAKVEVTLLDGSKVIVNVPVKVVEKELSVVKQQAIESIENAAQQKINEINNSVTLTLEQKEAAIAEVNKLKQQAIDHINNAPDVHSVEEIQQQEQAHIEQFNPEQFTIEQAKSNAIKSIEDAIQHMIDEIKARTDLTDKEKQEAIAKLNQLKEQAIQAIQRAQSIDEITEQLEQFKAQMKAANPTAKELAKRKQEAISRIKDFSNEKMNSIRNSEIGTADEKQAAMNQINEIVLETIRDINNAHTLQQVEAALNNGIARISAVQIVISDRAKQSSSTGNESNSHLTIGYGTANHPFNSSTIGHKKKIDEDDDIDPLHMRHFSNNFGNVIKNAIGVVGISGLLASFWFFIAKRRRKEDEEEELEIRDNNKDSIKETLDDTKHLPLLFAKRRRKEDEEDVTVEEKDSLNNGESLDKVKHTPFFLPKRRRKEDEEDVEVTNENTDEKVLKDNEHSPLLFAKRRKDKEEDVETTTSIESKDEDVPLLLAKKKNQKDNQSKDKKSASKNTSKKVAAKKKKKKSKKNKK</sequence>
<accession>Q8NWQ6</accession>
<comment type="subcellular location">
    <subcellularLocation>
        <location evidence="3">Cell membrane</location>
        <topology evidence="3">Single-pass membrane protein</topology>
    </subcellularLocation>
</comment>
<evidence type="ECO:0000255" key="1"/>
<evidence type="ECO:0000256" key="2">
    <source>
        <dbReference type="SAM" id="MobiDB-lite"/>
    </source>
</evidence>
<evidence type="ECO:0000305" key="3"/>
<evidence type="ECO:0007829" key="4">
    <source>
        <dbReference type="PDB" id="4KJM"/>
    </source>
</evidence>
<dbReference type="EMBL" id="BA000033">
    <property type="protein sequence ID" value="BAB95189.1"/>
    <property type="molecule type" value="Genomic_DNA"/>
</dbReference>
<dbReference type="RefSeq" id="WP_001109341.1">
    <property type="nucleotide sequence ID" value="NC_003923.1"/>
</dbReference>
<dbReference type="PDB" id="4KJM">
    <property type="method" value="X-ray"/>
    <property type="resolution" value="2.00 A"/>
    <property type="chains" value="A/B=3912-4037"/>
</dbReference>
<dbReference type="PDBsum" id="4KJM"/>
<dbReference type="SMR" id="Q8NWQ6"/>
<dbReference type="KEGG" id="sam:MW1324"/>
<dbReference type="HOGENOM" id="CLU_222673_0_0_9"/>
<dbReference type="EvolutionaryTrace" id="Q8NWQ6"/>
<dbReference type="GO" id="GO:0005886">
    <property type="term" value="C:plasma membrane"/>
    <property type="evidence" value="ECO:0007669"/>
    <property type="project" value="UniProtKB-SubCell"/>
</dbReference>
<dbReference type="Gene3D" id="3.10.20.890">
    <property type="match status" value="1"/>
</dbReference>
<dbReference type="Gene3D" id="1.20.120.1850">
    <property type="entry name" value="Ebh helix bundles repeating unit (S and A modules)"/>
    <property type="match status" value="8"/>
</dbReference>
<dbReference type="Gene3D" id="1.20.5.420">
    <property type="entry name" value="Immunoglobulin FC, subunit C"/>
    <property type="match status" value="80"/>
</dbReference>
<dbReference type="InterPro" id="IPR011439">
    <property type="entry name" value="DUF1542"/>
</dbReference>
<dbReference type="InterPro" id="IPR026361">
    <property type="entry name" value="Ebh_dom"/>
</dbReference>
<dbReference type="InterPro" id="IPR051197">
    <property type="entry name" value="ECM-binding_protein"/>
</dbReference>
<dbReference type="InterPro" id="IPR020840">
    <property type="entry name" value="Extracell_matrix-bd_GA"/>
</dbReference>
<dbReference type="InterPro" id="IPR002988">
    <property type="entry name" value="GA_module"/>
</dbReference>
<dbReference type="InterPro" id="IPR009063">
    <property type="entry name" value="Ig/albumin-bd_sf"/>
</dbReference>
<dbReference type="InterPro" id="IPR005877">
    <property type="entry name" value="YSIRK_signal_dom"/>
</dbReference>
<dbReference type="NCBIfam" id="TIGR04264">
    <property type="entry name" value="hyperosmo_Ebh"/>
    <property type="match status" value="1"/>
</dbReference>
<dbReference type="NCBIfam" id="TIGR01168">
    <property type="entry name" value="YSIRK_signal"/>
    <property type="match status" value="1"/>
</dbReference>
<dbReference type="PANTHER" id="PTHR33150">
    <property type="entry name" value="EXTRACELLULAR MATRIX-BINDING PROTEIN EBH"/>
    <property type="match status" value="1"/>
</dbReference>
<dbReference type="PANTHER" id="PTHR33150:SF1">
    <property type="entry name" value="EXTRACELLULAR MATRIX-BINDING PROTEIN EBH"/>
    <property type="match status" value="1"/>
</dbReference>
<dbReference type="Pfam" id="PF07564">
    <property type="entry name" value="DUF1542"/>
    <property type="match status" value="7"/>
</dbReference>
<dbReference type="Pfam" id="PF07554">
    <property type="entry name" value="FIVAR"/>
    <property type="match status" value="47"/>
</dbReference>
<dbReference type="Pfam" id="PF01468">
    <property type="entry name" value="GA"/>
    <property type="match status" value="10"/>
</dbReference>
<dbReference type="Pfam" id="PF04650">
    <property type="entry name" value="YSIRK_signal"/>
    <property type="match status" value="1"/>
</dbReference>
<dbReference type="SMART" id="SM00844">
    <property type="entry name" value="GA"/>
    <property type="match status" value="48"/>
</dbReference>
<dbReference type="SUPFAM" id="SSF46997">
    <property type="entry name" value="Bacterial immunoglobulin/albumin-binding domains"/>
    <property type="match status" value="93"/>
</dbReference>
<feature type="signal peptide" evidence="1">
    <location>
        <begin position="1"/>
        <end position="39"/>
    </location>
</feature>
<feature type="chain" id="PRO_0000345982" description="Extracellular matrix-binding protein ebh">
    <location>
        <begin position="40"/>
        <end position="9904"/>
    </location>
</feature>
<feature type="transmembrane region" description="Helical" evidence="1">
    <location>
        <begin position="9710"/>
        <end position="9730"/>
    </location>
</feature>
<feature type="domain" description="FIVAR 1">
    <location>
        <begin position="2524"/>
        <end position="2580"/>
    </location>
</feature>
<feature type="domain" description="FIVAR 2">
    <location>
        <begin position="2610"/>
        <end position="2666"/>
    </location>
</feature>
<feature type="domain" description="FIVAR 3">
    <location>
        <begin position="2687"/>
        <end position="2750"/>
    </location>
</feature>
<feature type="domain" description="FIVAR 4">
    <location>
        <begin position="2780"/>
        <end position="2836"/>
    </location>
</feature>
<feature type="domain" description="FIVAR 5">
    <location>
        <begin position="2864"/>
        <end position="2919"/>
    </location>
</feature>
<feature type="domain" description="FIVAR 6">
    <location>
        <begin position="2947"/>
        <end position="3002"/>
    </location>
</feature>
<feature type="domain" description="FIVAR 7">
    <location>
        <begin position="3030"/>
        <end position="3085"/>
    </location>
</feature>
<feature type="domain" description="FIVAR 8">
    <location>
        <begin position="3154"/>
        <end position="3212"/>
    </location>
</feature>
<feature type="domain" description="FIVAR 9">
    <location>
        <begin position="3280"/>
        <end position="3339"/>
    </location>
</feature>
<feature type="domain" description="FIVAR 10">
    <location>
        <begin position="3407"/>
        <end position="3465"/>
    </location>
</feature>
<feature type="domain" description="FIVAR 11">
    <location>
        <begin position="3533"/>
        <end position="3591"/>
    </location>
</feature>
<feature type="domain" description="FIVAR 12">
    <location>
        <begin position="3659"/>
        <end position="3717"/>
    </location>
</feature>
<feature type="domain" description="FIVAR 13">
    <location>
        <begin position="3785"/>
        <end position="3843"/>
    </location>
</feature>
<feature type="domain" description="FIVAR 14">
    <location>
        <begin position="3911"/>
        <end position="3969"/>
    </location>
</feature>
<feature type="domain" description="FIVAR 15">
    <location>
        <begin position="4037"/>
        <end position="4095"/>
    </location>
</feature>
<feature type="domain" description="FIVAR 16">
    <location>
        <begin position="4160"/>
        <end position="4208"/>
    </location>
</feature>
<feature type="domain" description="FIVAR 17">
    <location>
        <begin position="4276"/>
        <end position="4334"/>
    </location>
</feature>
<feature type="domain" description="FIVAR 18">
    <location>
        <begin position="4402"/>
        <end position="4460"/>
    </location>
</feature>
<feature type="domain" description="FIVAR 19">
    <location>
        <begin position="4528"/>
        <end position="4586"/>
    </location>
</feature>
<feature type="domain" description="FIVAR 20">
    <location>
        <begin position="4654"/>
        <end position="4712"/>
    </location>
</feature>
<feature type="domain" description="FIVAR 21">
    <location>
        <begin position="4780"/>
        <end position="4838"/>
    </location>
</feature>
<feature type="domain" description="FIVAR 22">
    <location>
        <begin position="4906"/>
        <end position="4964"/>
    </location>
</feature>
<feature type="domain" description="FIVAR 23">
    <location>
        <begin position="5032"/>
        <end position="5090"/>
    </location>
</feature>
<feature type="domain" description="FIVAR 24">
    <location>
        <begin position="5158"/>
        <end position="5216"/>
    </location>
</feature>
<feature type="domain" description="FIVAR 25">
    <location>
        <begin position="5284"/>
        <end position="5342"/>
    </location>
</feature>
<feature type="domain" description="FIVAR 26">
    <location>
        <begin position="5410"/>
        <end position="5468"/>
    </location>
</feature>
<feature type="domain" description="FIVAR 27">
    <location>
        <begin position="5536"/>
        <end position="5593"/>
    </location>
</feature>
<feature type="domain" description="FIVAR 28">
    <location>
        <begin position="5661"/>
        <end position="5719"/>
    </location>
</feature>
<feature type="domain" description="FIVAR 29">
    <location>
        <begin position="5787"/>
        <end position="5845"/>
    </location>
</feature>
<feature type="domain" description="FIVAR 30">
    <location>
        <begin position="5913"/>
        <end position="5971"/>
    </location>
</feature>
<feature type="domain" description="FIVAR 31">
    <location>
        <begin position="6039"/>
        <end position="6097"/>
    </location>
</feature>
<feature type="domain" description="FIVAR 32">
    <location>
        <begin position="6175"/>
        <end position="6223"/>
    </location>
</feature>
<feature type="domain" description="FIVAR 33">
    <location>
        <begin position="6291"/>
        <end position="6349"/>
    </location>
</feature>
<feature type="domain" description="FIVAR 34">
    <location>
        <begin position="6417"/>
        <end position="6475"/>
    </location>
</feature>
<feature type="domain" description="FIVAR 35">
    <location>
        <begin position="6543"/>
        <end position="6601"/>
    </location>
</feature>
<feature type="domain" description="FIVAR 36">
    <location>
        <begin position="6669"/>
        <end position="6727"/>
    </location>
</feature>
<feature type="domain" description="FIVAR 37">
    <location>
        <begin position="6795"/>
        <end position="6853"/>
    </location>
</feature>
<feature type="domain" description="FIVAR 38">
    <location>
        <begin position="6921"/>
        <end position="6979"/>
    </location>
</feature>
<feature type="domain" description="FIVAR 39">
    <location>
        <begin position="7047"/>
        <end position="7105"/>
    </location>
</feature>
<feature type="domain" description="FIVAR 40">
    <location>
        <begin position="7173"/>
        <end position="7231"/>
    </location>
</feature>
<feature type="domain" description="FIVAR 41">
    <location>
        <begin position="7299"/>
        <end position="7357"/>
    </location>
</feature>
<feature type="domain" description="FIVAR 42">
    <location>
        <begin position="7425"/>
        <end position="7486"/>
    </location>
</feature>
<feature type="domain" description="FIVAR 43">
    <location>
        <begin position="7551"/>
        <end position="7609"/>
    </location>
</feature>
<feature type="domain" description="FIVAR 44">
    <location>
        <begin position="7677"/>
        <end position="7735"/>
    </location>
</feature>
<feature type="domain" description="FIVAR 45">
    <location>
        <begin position="7803"/>
        <end position="7860"/>
    </location>
</feature>
<feature type="domain" description="FIVAR 46">
    <location>
        <begin position="7928"/>
        <end position="7986"/>
    </location>
</feature>
<feature type="domain" description="FIVAR 47">
    <location>
        <begin position="8054"/>
        <end position="8112"/>
    </location>
</feature>
<feature type="domain" description="FIVAR 48">
    <location>
        <begin position="8180"/>
        <end position="8238"/>
    </location>
</feature>
<feature type="domain" description="FIVAR 49">
    <location>
        <begin position="8306"/>
        <end position="8364"/>
    </location>
</feature>
<feature type="domain" description="FIVAR 50">
    <location>
        <begin position="8432"/>
        <end position="8490"/>
    </location>
</feature>
<feature type="domain" description="FIVAR 51">
    <location>
        <begin position="8558"/>
        <end position="8612"/>
    </location>
</feature>
<feature type="domain" description="FIVAR 52">
    <location>
        <begin position="8680"/>
        <end position="8739"/>
    </location>
</feature>
<feature type="domain" description="FIVAR 53">
    <location>
        <begin position="8934"/>
        <end position="8990"/>
    </location>
</feature>
<feature type="region of interest" description="Disordered" evidence="2">
    <location>
        <begin position="41"/>
        <end position="153"/>
    </location>
</feature>
<feature type="region of interest" description="Disordered" evidence="2">
    <location>
        <begin position="250"/>
        <end position="277"/>
    </location>
</feature>
<feature type="region of interest" description="Disordered" evidence="2">
    <location>
        <begin position="9807"/>
        <end position="9904"/>
    </location>
</feature>
<feature type="compositionally biased region" description="Polar residues" evidence="2">
    <location>
        <begin position="41"/>
        <end position="59"/>
    </location>
</feature>
<feature type="compositionally biased region" description="Low complexity" evidence="2">
    <location>
        <begin position="65"/>
        <end position="78"/>
    </location>
</feature>
<feature type="compositionally biased region" description="Polar residues" evidence="2">
    <location>
        <begin position="79"/>
        <end position="117"/>
    </location>
</feature>
<feature type="compositionally biased region" description="Basic and acidic residues" evidence="2">
    <location>
        <begin position="130"/>
        <end position="140"/>
    </location>
</feature>
<feature type="compositionally biased region" description="Polar residues" evidence="2">
    <location>
        <begin position="141"/>
        <end position="151"/>
    </location>
</feature>
<feature type="compositionally biased region" description="Polar residues" evidence="2">
    <location>
        <begin position="250"/>
        <end position="266"/>
    </location>
</feature>
<feature type="compositionally biased region" description="Basic and acidic residues" evidence="2">
    <location>
        <begin position="9822"/>
        <end position="9832"/>
    </location>
</feature>
<feature type="compositionally biased region" description="Basic and acidic residues" evidence="2">
    <location>
        <begin position="9871"/>
        <end position="9881"/>
    </location>
</feature>
<feature type="compositionally biased region" description="Basic residues" evidence="2">
    <location>
        <begin position="9886"/>
        <end position="9904"/>
    </location>
</feature>
<feature type="helix" evidence="4">
    <location>
        <begin position="3912"/>
        <end position="3919"/>
    </location>
</feature>
<feature type="helix" evidence="4">
    <location>
        <begin position="3922"/>
        <end position="3926"/>
    </location>
</feature>
<feature type="helix" evidence="4">
    <location>
        <begin position="3929"/>
        <end position="3932"/>
    </location>
</feature>
<feature type="helix" evidence="4">
    <location>
        <begin position="3936"/>
        <end position="3952"/>
    </location>
</feature>
<feature type="helix" evidence="4">
    <location>
        <begin position="3963"/>
        <end position="3979"/>
    </location>
</feature>
<feature type="helix" evidence="4">
    <location>
        <begin position="3982"/>
        <end position="3998"/>
    </location>
</feature>
<feature type="helix" evidence="4">
    <location>
        <begin position="4005"/>
        <end position="4016"/>
    </location>
</feature>
<feature type="helix" evidence="4">
    <location>
        <begin position="4021"/>
        <end position="4035"/>
    </location>
</feature>
<proteinExistence type="evidence at protein level"/>
<keyword id="KW-0002">3D-structure</keyword>
<keyword id="KW-1003">Cell membrane</keyword>
<keyword id="KW-0472">Membrane</keyword>
<keyword id="KW-0677">Repeat</keyword>
<keyword id="KW-0732">Signal</keyword>
<keyword id="KW-0812">Transmembrane</keyword>
<keyword id="KW-1133">Transmembrane helix</keyword>
<name>EBH_STAAW</name>